<feature type="chain" id="PRO_0000087647" description="U19-ctenitoxin-Pn1a">
    <location>
        <begin position="1"/>
        <end position="68"/>
    </location>
</feature>
<feature type="modified residue" description="Pyrrolidone carboxylic acid" evidence="2">
    <location>
        <position position="1"/>
    </location>
</feature>
<feature type="disulfide bond" evidence="1">
    <location>
        <begin position="8"/>
        <end position="19"/>
    </location>
</feature>
<feature type="disulfide bond" evidence="1">
    <location>
        <begin position="13"/>
        <end position="28"/>
    </location>
</feature>
<feature type="disulfide bond" evidence="1">
    <location>
        <begin position="18"/>
        <end position="51"/>
    </location>
</feature>
<feature type="disulfide bond" evidence="1">
    <location>
        <begin position="38"/>
        <end position="59"/>
    </location>
</feature>
<feature type="disulfide bond" evidence="1">
    <location>
        <begin position="53"/>
        <end position="65"/>
    </location>
</feature>
<name>TX16_PHONI</name>
<evidence type="ECO:0000250" key="1">
    <source>
        <dbReference type="UniProtKB" id="P25687"/>
    </source>
</evidence>
<evidence type="ECO:0000269" key="2">
    <source ref="1"/>
</evidence>
<evidence type="ECO:0000305" key="3"/>
<organism>
    <name type="scientific">Phoneutria nigriventer</name>
    <name type="common">Brazilian armed spider</name>
    <name type="synonym">Ctenus nigriventer</name>
    <dbReference type="NCBI Taxonomy" id="6918"/>
    <lineage>
        <taxon>Eukaryota</taxon>
        <taxon>Metazoa</taxon>
        <taxon>Ecdysozoa</taxon>
        <taxon>Arthropoda</taxon>
        <taxon>Chelicerata</taxon>
        <taxon>Arachnida</taxon>
        <taxon>Araneae</taxon>
        <taxon>Araneomorphae</taxon>
        <taxon>Entelegynae</taxon>
        <taxon>Lycosoidea</taxon>
        <taxon>Ctenidae</taxon>
        <taxon>Phoneutria</taxon>
    </lineage>
</organism>
<reference evidence="3" key="1">
    <citation type="submission" date="2004-05" db="UniProtKB">
        <title>Non-toxic protein PNTx16C1 from venom of Brazilian armed spider Phoneutria nigriventer has sequence similarities with toxins from other spiders.</title>
        <authorList>
            <person name="Richardson M."/>
            <person name="Pimenta A.M.C."/>
            <person name="Bemquerer M.P."/>
            <person name="Santoro M.M."/>
            <person name="Figueiredo S.G."/>
            <person name="Cordeiro M.N."/>
        </authorList>
    </citation>
    <scope>PROTEIN SEQUENCE</scope>
    <scope>FUNCTION</scope>
    <scope>SUBCELLULAR LOCATION</scope>
    <scope>TISSUE SPECIFICITY</scope>
    <scope>MASS SPECTROMETRY</scope>
    <scope>PYROGLUTAMATE FORMATION AT GLN-1</scope>
    <source>
        <tissue evidence="2">Venom</tissue>
    </source>
</reference>
<keyword id="KW-0903">Direct protein sequencing</keyword>
<keyword id="KW-1015">Disulfide bond</keyword>
<keyword id="KW-0873">Pyrrolidone carboxylic acid</keyword>
<keyword id="KW-0964">Secreted</keyword>
<proteinExistence type="evidence at protein level"/>
<accession>P83997</accession>
<dbReference type="SMR" id="P83997"/>
<dbReference type="ArachnoServer" id="AS000213">
    <property type="toxin name" value="U19-ctenitoxin-Pn1a"/>
</dbReference>
<dbReference type="GO" id="GO:0005576">
    <property type="term" value="C:extracellular region"/>
    <property type="evidence" value="ECO:0007669"/>
    <property type="project" value="UniProtKB-SubCell"/>
</dbReference>
<dbReference type="Gene3D" id="2.10.80.10">
    <property type="entry name" value="Lipase, subunit A"/>
    <property type="match status" value="1"/>
</dbReference>
<protein>
    <recommendedName>
        <fullName>U19-ctenitoxin-Pn1a</fullName>
        <shortName>U19-CNTX-Pn1a</shortName>
    </recommendedName>
    <alternativeName>
        <fullName>Non-toxic venom protein PNTx16C1</fullName>
    </alternativeName>
</protein>
<sequence length="68" mass="7605">QWIPGQSCTNADCGEGQCCTGGSYNRHCQSLSDDGKPCQRPNKYDEYKFGCPCKEGLMCQVINYCQKK</sequence>
<comment type="function">
    <text evidence="2">Non-toxic to mice and insects.</text>
</comment>
<comment type="subcellular location">
    <subcellularLocation>
        <location evidence="2">Secreted</location>
    </subcellularLocation>
</comment>
<comment type="tissue specificity">
    <text evidence="2">Expressed by the venom gland.</text>
</comment>
<comment type="mass spectrometry" mass="7666.6" method="Electrospray" evidence="2"/>
<comment type="similarity">
    <text>Belongs to the u-CNTX family.</text>
</comment>